<proteinExistence type="inferred from homology"/>
<evidence type="ECO:0000250" key="1"/>
<evidence type="ECO:0000255" key="2">
    <source>
        <dbReference type="PROSITE-ProRule" id="PRU01083"/>
    </source>
</evidence>
<evidence type="ECO:0000305" key="3"/>
<dbReference type="EC" id="3.5.4.26"/>
<dbReference type="EC" id="1.1.1.193"/>
<dbReference type="EMBL" id="AB003693">
    <property type="protein sequence ID" value="BAA20053.1"/>
    <property type="molecule type" value="Genomic_DNA"/>
</dbReference>
<dbReference type="SMR" id="O24750"/>
<dbReference type="UniPathway" id="UPA00275">
    <property type="reaction ID" value="UER00401"/>
</dbReference>
<dbReference type="UniPathway" id="UPA00275">
    <property type="reaction ID" value="UER00402"/>
</dbReference>
<dbReference type="GO" id="GO:0008703">
    <property type="term" value="F:5-amino-6-(5-phosphoribosylamino)uracil reductase activity"/>
    <property type="evidence" value="ECO:0007669"/>
    <property type="project" value="UniProtKB-EC"/>
</dbReference>
<dbReference type="GO" id="GO:0008835">
    <property type="term" value="F:diaminohydroxyphosphoribosylaminopyrimidine deaminase activity"/>
    <property type="evidence" value="ECO:0007669"/>
    <property type="project" value="UniProtKB-EC"/>
</dbReference>
<dbReference type="GO" id="GO:0008270">
    <property type="term" value="F:zinc ion binding"/>
    <property type="evidence" value="ECO:0007669"/>
    <property type="project" value="InterPro"/>
</dbReference>
<dbReference type="GO" id="GO:0009231">
    <property type="term" value="P:riboflavin biosynthetic process"/>
    <property type="evidence" value="ECO:0007669"/>
    <property type="project" value="UniProtKB-UniPathway"/>
</dbReference>
<dbReference type="CDD" id="cd01284">
    <property type="entry name" value="Riboflavin_deaminase-reductase"/>
    <property type="match status" value="1"/>
</dbReference>
<dbReference type="Gene3D" id="3.40.140.10">
    <property type="entry name" value="Cytidine Deaminase, domain 2"/>
    <property type="match status" value="1"/>
</dbReference>
<dbReference type="Gene3D" id="3.40.430.10">
    <property type="entry name" value="Dihydrofolate Reductase, subunit A"/>
    <property type="match status" value="2"/>
</dbReference>
<dbReference type="InterPro" id="IPR016192">
    <property type="entry name" value="APOBEC/CMP_deaminase_Zn-bd"/>
</dbReference>
<dbReference type="InterPro" id="IPR002125">
    <property type="entry name" value="CMP_dCMP_dom"/>
</dbReference>
<dbReference type="InterPro" id="IPR016193">
    <property type="entry name" value="Cytidine_deaminase-like"/>
</dbReference>
<dbReference type="InterPro" id="IPR024072">
    <property type="entry name" value="DHFR-like_dom_sf"/>
</dbReference>
<dbReference type="InterPro" id="IPR004794">
    <property type="entry name" value="Eubact_RibD"/>
</dbReference>
<dbReference type="InterPro" id="IPR002734">
    <property type="entry name" value="RibDG_C"/>
</dbReference>
<dbReference type="InterPro" id="IPR050765">
    <property type="entry name" value="Riboflavin_Biosynth_HTPR"/>
</dbReference>
<dbReference type="NCBIfam" id="TIGR00326">
    <property type="entry name" value="eubact_ribD"/>
    <property type="match status" value="1"/>
</dbReference>
<dbReference type="PANTHER" id="PTHR38011:SF7">
    <property type="entry name" value="2,5-DIAMINO-6-RIBOSYLAMINO-4(3H)-PYRIMIDINONE 5'-PHOSPHATE REDUCTASE"/>
    <property type="match status" value="1"/>
</dbReference>
<dbReference type="PANTHER" id="PTHR38011">
    <property type="entry name" value="DIHYDROFOLATE REDUCTASE FAMILY PROTEIN (AFU_ORTHOLOGUE AFUA_8G06820)"/>
    <property type="match status" value="1"/>
</dbReference>
<dbReference type="Pfam" id="PF00383">
    <property type="entry name" value="dCMP_cyt_deam_1"/>
    <property type="match status" value="1"/>
</dbReference>
<dbReference type="Pfam" id="PF01872">
    <property type="entry name" value="RibD_C"/>
    <property type="match status" value="1"/>
</dbReference>
<dbReference type="PIRSF" id="PIRSF006769">
    <property type="entry name" value="RibD"/>
    <property type="match status" value="1"/>
</dbReference>
<dbReference type="SUPFAM" id="SSF53927">
    <property type="entry name" value="Cytidine deaminase-like"/>
    <property type="match status" value="1"/>
</dbReference>
<dbReference type="SUPFAM" id="SSF53597">
    <property type="entry name" value="Dihydrofolate reductase-like"/>
    <property type="match status" value="1"/>
</dbReference>
<dbReference type="PROSITE" id="PS00903">
    <property type="entry name" value="CYT_DCMP_DEAMINASES_1"/>
    <property type="match status" value="1"/>
</dbReference>
<dbReference type="PROSITE" id="PS51747">
    <property type="entry name" value="CYT_DCMP_DEAMINASES_2"/>
    <property type="match status" value="1"/>
</dbReference>
<protein>
    <recommendedName>
        <fullName>Riboflavin biosynthesis protein RibD</fullName>
    </recommendedName>
    <domain>
        <recommendedName>
            <fullName>Diaminohydroxyphosphoribosylaminopyrimidine deaminase</fullName>
            <shortName>DRAP deaminase</shortName>
            <ecNumber>3.5.4.26</ecNumber>
        </recommendedName>
        <alternativeName>
            <fullName>Riboflavin-specific deaminase</fullName>
        </alternativeName>
    </domain>
    <domain>
        <recommendedName>
            <fullName>5-amino-6-(5-phosphoribosylamino)uracil reductase</fullName>
            <ecNumber>1.1.1.193</ecNumber>
        </recommendedName>
        <alternativeName>
            <fullName>HTP reductase</fullName>
        </alternativeName>
    </domain>
</protein>
<gene>
    <name type="primary">ribD</name>
    <name type="synonym">ribG</name>
</gene>
<organism>
    <name type="scientific">Corynebacterium ammoniagenes</name>
    <name type="common">Brevibacterium ammoniagenes</name>
    <dbReference type="NCBI Taxonomy" id="1697"/>
    <lineage>
        <taxon>Bacteria</taxon>
        <taxon>Bacillati</taxon>
        <taxon>Actinomycetota</taxon>
        <taxon>Actinomycetes</taxon>
        <taxon>Mycobacteriales</taxon>
        <taxon>Corynebacteriaceae</taxon>
        <taxon>Corynebacterium</taxon>
    </lineage>
</organism>
<name>RIBD_CORAM</name>
<keyword id="KW-0378">Hydrolase</keyword>
<keyword id="KW-0479">Metal-binding</keyword>
<keyword id="KW-0511">Multifunctional enzyme</keyword>
<keyword id="KW-0521">NADP</keyword>
<keyword id="KW-0560">Oxidoreductase</keyword>
<keyword id="KW-0686">Riboflavin biosynthesis</keyword>
<keyword id="KW-0862">Zinc</keyword>
<feature type="chain" id="PRO_0000171720" description="Riboflavin biosynthesis protein RibD">
    <location>
        <begin position="1"/>
        <end position="337"/>
    </location>
</feature>
<feature type="domain" description="CMP/dCMP-type deaminase" evidence="2">
    <location>
        <begin position="13"/>
        <end position="124"/>
    </location>
</feature>
<feature type="region of interest" description="Deaminase">
    <location>
        <begin position="1"/>
        <end position="157"/>
    </location>
</feature>
<feature type="region of interest" description="Reductase">
    <location>
        <begin position="158"/>
        <end position="337"/>
    </location>
</feature>
<feature type="active site" description="Proton donor" evidence="1">
    <location>
        <position position="65"/>
    </location>
</feature>
<feature type="binding site" evidence="1">
    <location>
        <position position="63"/>
    </location>
    <ligand>
        <name>Zn(2+)</name>
        <dbReference type="ChEBI" id="CHEBI:29105"/>
        <note>catalytic</note>
    </ligand>
</feature>
<feature type="binding site" evidence="1">
    <location>
        <position position="88"/>
    </location>
    <ligand>
        <name>Zn(2+)</name>
        <dbReference type="ChEBI" id="CHEBI:29105"/>
        <note>catalytic</note>
    </ligand>
</feature>
<feature type="binding site" evidence="1">
    <location>
        <position position="97"/>
    </location>
    <ligand>
        <name>Zn(2+)</name>
        <dbReference type="ChEBI" id="CHEBI:29105"/>
        <note>catalytic</note>
    </ligand>
</feature>
<feature type="binding site" evidence="1">
    <location>
        <position position="166"/>
    </location>
    <ligand>
        <name>NADP(+)</name>
        <dbReference type="ChEBI" id="CHEBI:58349"/>
    </ligand>
</feature>
<feature type="binding site" evidence="1">
    <location>
        <begin position="173"/>
        <end position="176"/>
    </location>
    <ligand>
        <name>NADP(+)</name>
        <dbReference type="ChEBI" id="CHEBI:58349"/>
    </ligand>
</feature>
<feature type="binding site" evidence="1">
    <location>
        <position position="180"/>
    </location>
    <ligand>
        <name>substrate</name>
    </ligand>
</feature>
<feature type="binding site" evidence="1">
    <location>
        <position position="182"/>
    </location>
    <ligand>
        <name>NADP(+)</name>
        <dbReference type="ChEBI" id="CHEBI:58349"/>
    </ligand>
</feature>
<feature type="binding site" evidence="1">
    <location>
        <position position="196"/>
    </location>
    <ligand>
        <name>substrate</name>
    </ligand>
</feature>
<feature type="binding site" evidence="1">
    <location>
        <position position="208"/>
    </location>
    <ligand>
        <name>NADP(+)</name>
        <dbReference type="ChEBI" id="CHEBI:58349"/>
    </ligand>
</feature>
<feature type="binding site" evidence="1">
    <location>
        <position position="212"/>
    </location>
    <ligand>
        <name>NADP(+)</name>
        <dbReference type="ChEBI" id="CHEBI:58349"/>
    </ligand>
</feature>
<feature type="binding site" evidence="1">
    <location>
        <position position="216"/>
    </location>
    <ligand>
        <name>substrate</name>
    </ligand>
</feature>
<feature type="binding site" evidence="1">
    <location>
        <position position="219"/>
    </location>
    <ligand>
        <name>substrate</name>
    </ligand>
</feature>
<feature type="binding site" evidence="1">
    <location>
        <position position="279"/>
    </location>
    <ligand>
        <name>substrate</name>
    </ligand>
</feature>
<feature type="binding site" evidence="1">
    <location>
        <begin position="281"/>
        <end position="287"/>
    </location>
    <ligand>
        <name>NADP(+)</name>
        <dbReference type="ChEBI" id="CHEBI:58349"/>
    </ligand>
</feature>
<reference key="1">
    <citation type="patent" date="1996-12-31" number="US5589355">
        <title>Process for producing riboflavin.</title>
        <authorList>
            <person name="Koizumi S."/>
            <person name="Yonetani Y."/>
            <person name="Teshiba S."/>
        </authorList>
    </citation>
    <scope>NUCLEOTIDE SEQUENCE [GENOMIC DNA]</scope>
</reference>
<comment type="function">
    <text>Converts 2,5-diamino-6-(ribosylamino)-4(3h)-pyrimidinone 5'-phosphate into 5-amino-6-(ribosylamino)-2,4(1h,3h)-pyrimidinedione 5'-phosphate.</text>
</comment>
<comment type="catalytic activity">
    <reaction>
        <text>2,5-diamino-6-hydroxy-4-(5-phosphoribosylamino)-pyrimidine + H2O + H(+) = 5-amino-6-(5-phospho-D-ribosylamino)uracil + NH4(+)</text>
        <dbReference type="Rhea" id="RHEA:21868"/>
        <dbReference type="ChEBI" id="CHEBI:15377"/>
        <dbReference type="ChEBI" id="CHEBI:15378"/>
        <dbReference type="ChEBI" id="CHEBI:28938"/>
        <dbReference type="ChEBI" id="CHEBI:58453"/>
        <dbReference type="ChEBI" id="CHEBI:58614"/>
        <dbReference type="EC" id="3.5.4.26"/>
    </reaction>
</comment>
<comment type="catalytic activity">
    <reaction>
        <text>5-amino-6-(5-phospho-D-ribitylamino)uracil + NADP(+) = 5-amino-6-(5-phospho-D-ribosylamino)uracil + NADPH + H(+)</text>
        <dbReference type="Rhea" id="RHEA:17845"/>
        <dbReference type="ChEBI" id="CHEBI:15378"/>
        <dbReference type="ChEBI" id="CHEBI:57783"/>
        <dbReference type="ChEBI" id="CHEBI:58349"/>
        <dbReference type="ChEBI" id="CHEBI:58421"/>
        <dbReference type="ChEBI" id="CHEBI:58453"/>
        <dbReference type="EC" id="1.1.1.193"/>
    </reaction>
</comment>
<comment type="cofactor">
    <cofactor evidence="1">
        <name>Zn(2+)</name>
        <dbReference type="ChEBI" id="CHEBI:29105"/>
    </cofactor>
    <text evidence="1">Binds 1 zinc ion.</text>
</comment>
<comment type="pathway">
    <text>Cofactor biosynthesis; riboflavin biosynthesis; 5-amino-6-(D-ribitylamino)uracil from GTP: step 2/4.</text>
</comment>
<comment type="pathway">
    <text>Cofactor biosynthesis; riboflavin biosynthesis; 5-amino-6-(D-ribitylamino)uracil from GTP: step 3/4.</text>
</comment>
<comment type="similarity">
    <text evidence="3">In the N-terminal section; belongs to the cytidine and deoxycytidylate deaminase family.</text>
</comment>
<comment type="similarity">
    <text evidence="3">In the C-terminal section; belongs to the HTP reductase family.</text>
</comment>
<sequence length="337" mass="34888">MDSNPGADQAVAPIVEQALRTAMSAGWEVRGTTSPNPPVGAVIISTSGEIVGTGATQPVGGVHAEVQALADAAGKTEGATAVVTLEPCRHTGRTGPCTQALIEAGIKDVLFLHSDPNPSAGGGEQVLVDAGINVVQLPSPEGVPDALIPWLKSVQLRRPHVTLKFAQTIDGFTAAADGTSQWITGEMARDYVHADREHRDAIIIGTGTALIDNPSLTARYPDGTQREHQPRRVVIGRRNIADAGDAASNLNRLGFEQYATIDEALAELYATGARDVLVEGGAGLASGFANQGLVDWLQVYQAPLLLGEGISVLAHPLTNTLKGASALCPRAASGAGR</sequence>
<accession>O24750</accession>